<geneLocation type="chloroplast"/>
<keyword id="KW-0150">Chloroplast</keyword>
<keyword id="KW-0934">Plastid</keyword>
<keyword id="KW-0687">Ribonucleoprotein</keyword>
<keyword id="KW-0689">Ribosomal protein</keyword>
<name>RR15_CUCSA</name>
<protein>
    <recommendedName>
        <fullName evidence="3">Small ribosomal subunit protein uS15c</fullName>
    </recommendedName>
    <alternativeName>
        <fullName>30S ribosomal protein S15, chloroplastic</fullName>
    </alternativeName>
</protein>
<feature type="chain" id="PRO_0000115631" description="Small ribosomal subunit protein uS15c">
    <location>
        <begin position="1"/>
        <end position="90"/>
    </location>
</feature>
<feature type="region of interest" description="Disordered" evidence="2">
    <location>
        <begin position="1"/>
        <end position="20"/>
    </location>
</feature>
<feature type="compositionally biased region" description="Polar residues" evidence="2">
    <location>
        <begin position="1"/>
        <end position="11"/>
    </location>
</feature>
<proteinExistence type="inferred from homology"/>
<gene>
    <name type="primary">rps15</name>
    <name type="ordered locus">CsCp112</name>
</gene>
<comment type="subunit">
    <text evidence="1">Part of the 30S ribosomal subunit.</text>
</comment>
<comment type="subcellular location">
    <subcellularLocation>
        <location>Plastid</location>
        <location>Chloroplast</location>
    </subcellularLocation>
</comment>
<comment type="similarity">
    <text evidence="3">Belongs to the universal ribosomal protein uS15 family.</text>
</comment>
<comment type="sequence caution" evidence="3">
    <conflict type="erroneous initiation">
        <sequence resource="EMBL-CDS" id="ABI98802"/>
    </conflict>
</comment>
<sequence length="90" mass="10670">MVKNSFSSVISQEEKKENGGSVEFQVVSFTNKIRRLTSHLELHKKDYLSQRGLRKILGKRQRLLSYLSKKNKMRYKELINQLDIRESKTQ</sequence>
<evidence type="ECO:0000250" key="1"/>
<evidence type="ECO:0000256" key="2">
    <source>
        <dbReference type="SAM" id="MobiDB-lite"/>
    </source>
</evidence>
<evidence type="ECO:0000305" key="3"/>
<organism>
    <name type="scientific">Cucumis sativus</name>
    <name type="common">Cucumber</name>
    <dbReference type="NCBI Taxonomy" id="3659"/>
    <lineage>
        <taxon>Eukaryota</taxon>
        <taxon>Viridiplantae</taxon>
        <taxon>Streptophyta</taxon>
        <taxon>Embryophyta</taxon>
        <taxon>Tracheophyta</taxon>
        <taxon>Spermatophyta</taxon>
        <taxon>Magnoliopsida</taxon>
        <taxon>eudicotyledons</taxon>
        <taxon>Gunneridae</taxon>
        <taxon>Pentapetalae</taxon>
        <taxon>rosids</taxon>
        <taxon>fabids</taxon>
        <taxon>Cucurbitales</taxon>
        <taxon>Cucurbitaceae</taxon>
        <taxon>Benincaseae</taxon>
        <taxon>Cucumis</taxon>
    </lineage>
</organism>
<accession>Q4VZL1</accession>
<accession>A5J1Z0</accession>
<accession>A5J273</accession>
<dbReference type="EMBL" id="DQ119058">
    <property type="protein sequence ID" value="AAZ94705.1"/>
    <property type="molecule type" value="Genomic_DNA"/>
</dbReference>
<dbReference type="EMBL" id="AJ970307">
    <property type="protein sequence ID" value="CAJ00816.1"/>
    <property type="molecule type" value="Genomic_DNA"/>
</dbReference>
<dbReference type="EMBL" id="DQ865975">
    <property type="protein sequence ID" value="ABI97470.1"/>
    <property type="molecule type" value="Genomic_DNA"/>
</dbReference>
<dbReference type="EMBL" id="DQ865976">
    <property type="protein sequence ID" value="ABI98802.1"/>
    <property type="status" value="ALT_INIT"/>
    <property type="molecule type" value="Genomic_DNA"/>
</dbReference>
<dbReference type="RefSeq" id="YP_247657.1">
    <property type="nucleotide sequence ID" value="NC_007144.1"/>
</dbReference>
<dbReference type="SMR" id="Q4VZL1"/>
<dbReference type="GeneID" id="3429309"/>
<dbReference type="KEGG" id="csv:3429309"/>
<dbReference type="OrthoDB" id="441444at2759"/>
<dbReference type="GO" id="GO:0009507">
    <property type="term" value="C:chloroplast"/>
    <property type="evidence" value="ECO:0007669"/>
    <property type="project" value="UniProtKB-SubCell"/>
</dbReference>
<dbReference type="GO" id="GO:1990904">
    <property type="term" value="C:ribonucleoprotein complex"/>
    <property type="evidence" value="ECO:0007669"/>
    <property type="project" value="UniProtKB-KW"/>
</dbReference>
<dbReference type="GO" id="GO:0005840">
    <property type="term" value="C:ribosome"/>
    <property type="evidence" value="ECO:0007669"/>
    <property type="project" value="UniProtKB-KW"/>
</dbReference>
<dbReference type="GO" id="GO:0003735">
    <property type="term" value="F:structural constituent of ribosome"/>
    <property type="evidence" value="ECO:0007669"/>
    <property type="project" value="InterPro"/>
</dbReference>
<dbReference type="GO" id="GO:0006412">
    <property type="term" value="P:translation"/>
    <property type="evidence" value="ECO:0007669"/>
    <property type="project" value="UniProtKB-UniRule"/>
</dbReference>
<dbReference type="CDD" id="cd00353">
    <property type="entry name" value="Ribosomal_S15p_S13e"/>
    <property type="match status" value="1"/>
</dbReference>
<dbReference type="Gene3D" id="1.10.287.10">
    <property type="entry name" value="S15/NS1, RNA-binding"/>
    <property type="match status" value="1"/>
</dbReference>
<dbReference type="HAMAP" id="MF_01343_B">
    <property type="entry name" value="Ribosomal_uS15_B"/>
    <property type="match status" value="1"/>
</dbReference>
<dbReference type="InterPro" id="IPR000589">
    <property type="entry name" value="Ribosomal_uS15"/>
</dbReference>
<dbReference type="InterPro" id="IPR005290">
    <property type="entry name" value="Ribosomal_uS15_bac-type"/>
</dbReference>
<dbReference type="InterPro" id="IPR009068">
    <property type="entry name" value="uS15_NS1_RNA-bd_sf"/>
</dbReference>
<dbReference type="NCBIfam" id="TIGR00952">
    <property type="entry name" value="S15_bact"/>
    <property type="match status" value="1"/>
</dbReference>
<dbReference type="PANTHER" id="PTHR23321">
    <property type="entry name" value="RIBOSOMAL PROTEIN S15, BACTERIAL AND ORGANELLAR"/>
    <property type="match status" value="1"/>
</dbReference>
<dbReference type="PANTHER" id="PTHR23321:SF26">
    <property type="entry name" value="SMALL RIBOSOMAL SUBUNIT PROTEIN US15M"/>
    <property type="match status" value="1"/>
</dbReference>
<dbReference type="Pfam" id="PF00312">
    <property type="entry name" value="Ribosomal_S15"/>
    <property type="match status" value="1"/>
</dbReference>
<dbReference type="SMART" id="SM01387">
    <property type="entry name" value="Ribosomal_S15"/>
    <property type="match status" value="1"/>
</dbReference>
<dbReference type="SUPFAM" id="SSF47060">
    <property type="entry name" value="S15/NS1 RNA-binding domain"/>
    <property type="match status" value="1"/>
</dbReference>
<dbReference type="PROSITE" id="PS00362">
    <property type="entry name" value="RIBOSOMAL_S15"/>
    <property type="match status" value="1"/>
</dbReference>
<reference key="1">
    <citation type="journal article" date="2006" name="Plant Cell Rep.">
        <title>Complete sequence and organization of the cucumber (Cucumis sativus L. cv. Baekmibaekdadagi) chloroplast genome.</title>
        <authorList>
            <person name="Kim J.-S."/>
            <person name="Jung J.D."/>
            <person name="Lee J.-A."/>
            <person name="Park H.-W."/>
            <person name="Oh K.-H."/>
            <person name="Jeong W.J."/>
            <person name="Choi D.-W."/>
            <person name="Liu J.R."/>
            <person name="Cho K.Y."/>
        </authorList>
    </citation>
    <scope>NUCLEOTIDE SEQUENCE [LARGE SCALE GENOMIC DNA]</scope>
    <source>
        <strain>cv. Baekmibaekdadagi</strain>
    </source>
</reference>
<reference key="2">
    <citation type="journal article" date="2007" name="Cell. Mol. Biol. Lett.">
        <title>The complete structure of the cucumber (Cucumis sativus L.) chloroplast genome: its composition and comparative analysis.</title>
        <authorList>
            <person name="Plader W.W."/>
            <person name="Yukawa Y."/>
            <person name="Sugiura M."/>
            <person name="Malepszy S."/>
        </authorList>
    </citation>
    <scope>NUCLEOTIDE SEQUENCE [LARGE SCALE GENOMIC DNA]</scope>
    <source>
        <strain>cv. Borszczagowski</strain>
    </source>
</reference>
<reference key="3">
    <citation type="journal article" date="2007" name="Genome">
        <title>Sequencing cucumber (Cucumis sativus L.) chloroplast genomes identifies differences between chilling-tolerant and -susceptible cucumber lines.</title>
        <authorList>
            <person name="Chung S.-M."/>
            <person name="Gordon V.S."/>
            <person name="Staub J.E."/>
        </authorList>
    </citation>
    <scope>NUCLEOTIDE SEQUENCE [LARGE SCALE GENOMIC DNA]</scope>
    <source>
        <strain>cv. Chipper</strain>
        <strain>cv. Gy14</strain>
    </source>
</reference>